<keyword id="KW-0004">4Fe-4S</keyword>
<keyword id="KW-0963">Cytoplasm</keyword>
<keyword id="KW-0408">Iron</keyword>
<keyword id="KW-0411">Iron-sulfur</keyword>
<keyword id="KW-0479">Metal-binding</keyword>
<keyword id="KW-0949">S-adenosyl-L-methionine</keyword>
<keyword id="KW-0808">Transferase</keyword>
<accession>Q0BEZ5</accession>
<gene>
    <name evidence="1" type="primary">rimO</name>
    <name type="ordered locus">Bamb_1722</name>
</gene>
<proteinExistence type="inferred from homology"/>
<feature type="chain" id="PRO_0000374728" description="Ribosomal protein uS12 methylthiotransferase RimO">
    <location>
        <begin position="1"/>
        <end position="453"/>
    </location>
</feature>
<feature type="domain" description="MTTase N-terminal" evidence="1">
    <location>
        <begin position="5"/>
        <end position="120"/>
    </location>
</feature>
<feature type="domain" description="Radical SAM core" evidence="2">
    <location>
        <begin position="137"/>
        <end position="382"/>
    </location>
</feature>
<feature type="domain" description="TRAM" evidence="1">
    <location>
        <begin position="385"/>
        <end position="453"/>
    </location>
</feature>
<feature type="binding site" evidence="1">
    <location>
        <position position="14"/>
    </location>
    <ligand>
        <name>[4Fe-4S] cluster</name>
        <dbReference type="ChEBI" id="CHEBI:49883"/>
        <label>1</label>
    </ligand>
</feature>
<feature type="binding site" evidence="1">
    <location>
        <position position="50"/>
    </location>
    <ligand>
        <name>[4Fe-4S] cluster</name>
        <dbReference type="ChEBI" id="CHEBI:49883"/>
        <label>1</label>
    </ligand>
</feature>
<feature type="binding site" evidence="1">
    <location>
        <position position="79"/>
    </location>
    <ligand>
        <name>[4Fe-4S] cluster</name>
        <dbReference type="ChEBI" id="CHEBI:49883"/>
        <label>1</label>
    </ligand>
</feature>
<feature type="binding site" evidence="1">
    <location>
        <position position="151"/>
    </location>
    <ligand>
        <name>[4Fe-4S] cluster</name>
        <dbReference type="ChEBI" id="CHEBI:49883"/>
        <label>2</label>
        <note>4Fe-4S-S-AdoMet</note>
    </ligand>
</feature>
<feature type="binding site" evidence="1">
    <location>
        <position position="155"/>
    </location>
    <ligand>
        <name>[4Fe-4S] cluster</name>
        <dbReference type="ChEBI" id="CHEBI:49883"/>
        <label>2</label>
        <note>4Fe-4S-S-AdoMet</note>
    </ligand>
</feature>
<feature type="binding site" evidence="1">
    <location>
        <position position="158"/>
    </location>
    <ligand>
        <name>[4Fe-4S] cluster</name>
        <dbReference type="ChEBI" id="CHEBI:49883"/>
        <label>2</label>
        <note>4Fe-4S-S-AdoMet</note>
    </ligand>
</feature>
<comment type="function">
    <text evidence="1">Catalyzes the methylthiolation of an aspartic acid residue of ribosomal protein uS12.</text>
</comment>
<comment type="catalytic activity">
    <reaction evidence="1">
        <text>L-aspartate(89)-[ribosomal protein uS12]-hydrogen + (sulfur carrier)-SH + AH2 + 2 S-adenosyl-L-methionine = 3-methylsulfanyl-L-aspartate(89)-[ribosomal protein uS12]-hydrogen + (sulfur carrier)-H + 5'-deoxyadenosine + L-methionine + A + S-adenosyl-L-homocysteine + 2 H(+)</text>
        <dbReference type="Rhea" id="RHEA:37087"/>
        <dbReference type="Rhea" id="RHEA-COMP:10460"/>
        <dbReference type="Rhea" id="RHEA-COMP:10461"/>
        <dbReference type="Rhea" id="RHEA-COMP:14737"/>
        <dbReference type="Rhea" id="RHEA-COMP:14739"/>
        <dbReference type="ChEBI" id="CHEBI:13193"/>
        <dbReference type="ChEBI" id="CHEBI:15378"/>
        <dbReference type="ChEBI" id="CHEBI:17319"/>
        <dbReference type="ChEBI" id="CHEBI:17499"/>
        <dbReference type="ChEBI" id="CHEBI:29917"/>
        <dbReference type="ChEBI" id="CHEBI:29961"/>
        <dbReference type="ChEBI" id="CHEBI:57844"/>
        <dbReference type="ChEBI" id="CHEBI:57856"/>
        <dbReference type="ChEBI" id="CHEBI:59789"/>
        <dbReference type="ChEBI" id="CHEBI:64428"/>
        <dbReference type="ChEBI" id="CHEBI:73599"/>
        <dbReference type="EC" id="2.8.4.4"/>
    </reaction>
</comment>
<comment type="cofactor">
    <cofactor evidence="1">
        <name>[4Fe-4S] cluster</name>
        <dbReference type="ChEBI" id="CHEBI:49883"/>
    </cofactor>
    <text evidence="1">Binds 2 [4Fe-4S] clusters. One cluster is coordinated with 3 cysteines and an exchangeable S-adenosyl-L-methionine.</text>
</comment>
<comment type="subcellular location">
    <subcellularLocation>
        <location evidence="1">Cytoplasm</location>
    </subcellularLocation>
</comment>
<comment type="similarity">
    <text evidence="1">Belongs to the methylthiotransferase family. RimO subfamily.</text>
</comment>
<organism>
    <name type="scientific">Burkholderia ambifaria (strain ATCC BAA-244 / DSM 16087 / CCUG 44356 / LMG 19182 / AMMD)</name>
    <name type="common">Burkholderia cepacia (strain AMMD)</name>
    <dbReference type="NCBI Taxonomy" id="339670"/>
    <lineage>
        <taxon>Bacteria</taxon>
        <taxon>Pseudomonadati</taxon>
        <taxon>Pseudomonadota</taxon>
        <taxon>Betaproteobacteria</taxon>
        <taxon>Burkholderiales</taxon>
        <taxon>Burkholderiaceae</taxon>
        <taxon>Burkholderia</taxon>
        <taxon>Burkholderia cepacia complex</taxon>
    </lineage>
</organism>
<evidence type="ECO:0000255" key="1">
    <source>
        <dbReference type="HAMAP-Rule" id="MF_01865"/>
    </source>
</evidence>
<evidence type="ECO:0000255" key="2">
    <source>
        <dbReference type="PROSITE-ProRule" id="PRU01266"/>
    </source>
</evidence>
<reference key="1">
    <citation type="submission" date="2006-08" db="EMBL/GenBank/DDBJ databases">
        <title>Complete sequence of chromosome 1 of Burkholderia cepacia AMMD.</title>
        <authorList>
            <person name="Copeland A."/>
            <person name="Lucas S."/>
            <person name="Lapidus A."/>
            <person name="Barry K."/>
            <person name="Detter J.C."/>
            <person name="Glavina del Rio T."/>
            <person name="Hammon N."/>
            <person name="Israni S."/>
            <person name="Pitluck S."/>
            <person name="Bruce D."/>
            <person name="Chain P."/>
            <person name="Malfatti S."/>
            <person name="Shin M."/>
            <person name="Vergez L."/>
            <person name="Schmutz J."/>
            <person name="Larimer F."/>
            <person name="Land M."/>
            <person name="Hauser L."/>
            <person name="Kyrpides N."/>
            <person name="Kim E."/>
            <person name="Parke J."/>
            <person name="Coenye T."/>
            <person name="Konstantinidis K."/>
            <person name="Ramette A."/>
            <person name="Tiedje J."/>
            <person name="Richardson P."/>
        </authorList>
    </citation>
    <scope>NUCLEOTIDE SEQUENCE [LARGE SCALE GENOMIC DNA]</scope>
    <source>
        <strain>ATCC BAA-244 / DSM 16087 / CCUG 44356 / LMG 19182 / AMMD</strain>
    </source>
</reference>
<dbReference type="EC" id="2.8.4.4" evidence="1"/>
<dbReference type="EMBL" id="CP000440">
    <property type="protein sequence ID" value="ABI87278.1"/>
    <property type="molecule type" value="Genomic_DNA"/>
</dbReference>
<dbReference type="RefSeq" id="WP_011657002.1">
    <property type="nucleotide sequence ID" value="NC_008390.1"/>
</dbReference>
<dbReference type="SMR" id="Q0BEZ5"/>
<dbReference type="GeneID" id="93086070"/>
<dbReference type="KEGG" id="bam:Bamb_1722"/>
<dbReference type="PATRIC" id="fig|339670.21.peg.3239"/>
<dbReference type="eggNOG" id="COG0621">
    <property type="taxonomic scope" value="Bacteria"/>
</dbReference>
<dbReference type="Proteomes" id="UP000000662">
    <property type="component" value="Chromosome 1"/>
</dbReference>
<dbReference type="GO" id="GO:0005829">
    <property type="term" value="C:cytosol"/>
    <property type="evidence" value="ECO:0007669"/>
    <property type="project" value="TreeGrafter"/>
</dbReference>
<dbReference type="GO" id="GO:0051539">
    <property type="term" value="F:4 iron, 4 sulfur cluster binding"/>
    <property type="evidence" value="ECO:0007669"/>
    <property type="project" value="UniProtKB-UniRule"/>
</dbReference>
<dbReference type="GO" id="GO:0035599">
    <property type="term" value="F:aspartic acid methylthiotransferase activity"/>
    <property type="evidence" value="ECO:0007669"/>
    <property type="project" value="TreeGrafter"/>
</dbReference>
<dbReference type="GO" id="GO:0046872">
    <property type="term" value="F:metal ion binding"/>
    <property type="evidence" value="ECO:0007669"/>
    <property type="project" value="UniProtKB-KW"/>
</dbReference>
<dbReference type="GO" id="GO:0103039">
    <property type="term" value="F:protein methylthiotransferase activity"/>
    <property type="evidence" value="ECO:0007669"/>
    <property type="project" value="UniProtKB-EC"/>
</dbReference>
<dbReference type="GO" id="GO:0006400">
    <property type="term" value="P:tRNA modification"/>
    <property type="evidence" value="ECO:0007669"/>
    <property type="project" value="InterPro"/>
</dbReference>
<dbReference type="CDD" id="cd01335">
    <property type="entry name" value="Radical_SAM"/>
    <property type="match status" value="1"/>
</dbReference>
<dbReference type="FunFam" id="3.40.50.12160:FF:000002">
    <property type="entry name" value="Ribosomal protein S12 methylthiotransferase RimO"/>
    <property type="match status" value="1"/>
</dbReference>
<dbReference type="FunFam" id="3.80.30.20:FF:000001">
    <property type="entry name" value="tRNA-2-methylthio-N(6)-dimethylallyladenosine synthase 2"/>
    <property type="match status" value="1"/>
</dbReference>
<dbReference type="Gene3D" id="3.40.50.12160">
    <property type="entry name" value="Methylthiotransferase, N-terminal domain"/>
    <property type="match status" value="1"/>
</dbReference>
<dbReference type="Gene3D" id="2.40.50.140">
    <property type="entry name" value="Nucleic acid-binding proteins"/>
    <property type="match status" value="1"/>
</dbReference>
<dbReference type="Gene3D" id="3.80.30.20">
    <property type="entry name" value="tm_1862 like domain"/>
    <property type="match status" value="1"/>
</dbReference>
<dbReference type="HAMAP" id="MF_01865">
    <property type="entry name" value="MTTase_RimO"/>
    <property type="match status" value="1"/>
</dbReference>
<dbReference type="InterPro" id="IPR006638">
    <property type="entry name" value="Elp3/MiaA/NifB-like_rSAM"/>
</dbReference>
<dbReference type="InterPro" id="IPR005839">
    <property type="entry name" value="Methylthiotransferase"/>
</dbReference>
<dbReference type="InterPro" id="IPR020612">
    <property type="entry name" value="Methylthiotransferase_CS"/>
</dbReference>
<dbReference type="InterPro" id="IPR013848">
    <property type="entry name" value="Methylthiotransferase_N"/>
</dbReference>
<dbReference type="InterPro" id="IPR038135">
    <property type="entry name" value="Methylthiotransferase_N_sf"/>
</dbReference>
<dbReference type="InterPro" id="IPR012340">
    <property type="entry name" value="NA-bd_OB-fold"/>
</dbReference>
<dbReference type="InterPro" id="IPR005840">
    <property type="entry name" value="Ribosomal_uS12_MeSTrfase_RimO"/>
</dbReference>
<dbReference type="InterPro" id="IPR007197">
    <property type="entry name" value="rSAM"/>
</dbReference>
<dbReference type="InterPro" id="IPR023404">
    <property type="entry name" value="rSAM_horseshoe"/>
</dbReference>
<dbReference type="InterPro" id="IPR002792">
    <property type="entry name" value="TRAM_dom"/>
</dbReference>
<dbReference type="NCBIfam" id="TIGR01125">
    <property type="entry name" value="30S ribosomal protein S12 methylthiotransferase RimO"/>
    <property type="match status" value="1"/>
</dbReference>
<dbReference type="NCBIfam" id="TIGR00089">
    <property type="entry name" value="MiaB/RimO family radical SAM methylthiotransferase"/>
    <property type="match status" value="1"/>
</dbReference>
<dbReference type="PANTHER" id="PTHR43837">
    <property type="entry name" value="RIBOSOMAL PROTEIN S12 METHYLTHIOTRANSFERASE RIMO"/>
    <property type="match status" value="1"/>
</dbReference>
<dbReference type="PANTHER" id="PTHR43837:SF1">
    <property type="entry name" value="RIBOSOMAL PROTEIN US12 METHYLTHIOTRANSFERASE RIMO"/>
    <property type="match status" value="1"/>
</dbReference>
<dbReference type="Pfam" id="PF04055">
    <property type="entry name" value="Radical_SAM"/>
    <property type="match status" value="1"/>
</dbReference>
<dbReference type="Pfam" id="PF18693">
    <property type="entry name" value="TRAM_2"/>
    <property type="match status" value="1"/>
</dbReference>
<dbReference type="Pfam" id="PF00919">
    <property type="entry name" value="UPF0004"/>
    <property type="match status" value="1"/>
</dbReference>
<dbReference type="SFLD" id="SFLDG01082">
    <property type="entry name" value="B12-binding_domain_containing"/>
    <property type="match status" value="1"/>
</dbReference>
<dbReference type="SFLD" id="SFLDS00029">
    <property type="entry name" value="Radical_SAM"/>
    <property type="match status" value="1"/>
</dbReference>
<dbReference type="SFLD" id="SFLDF00274">
    <property type="entry name" value="ribosomal_protein_S12_methylth"/>
    <property type="match status" value="1"/>
</dbReference>
<dbReference type="SMART" id="SM00729">
    <property type="entry name" value="Elp3"/>
    <property type="match status" value="1"/>
</dbReference>
<dbReference type="SUPFAM" id="SSF102114">
    <property type="entry name" value="Radical SAM enzymes"/>
    <property type="match status" value="1"/>
</dbReference>
<dbReference type="PROSITE" id="PS51449">
    <property type="entry name" value="MTTASE_N"/>
    <property type="match status" value="1"/>
</dbReference>
<dbReference type="PROSITE" id="PS01278">
    <property type="entry name" value="MTTASE_RADICAL"/>
    <property type="match status" value="1"/>
</dbReference>
<dbReference type="PROSITE" id="PS51918">
    <property type="entry name" value="RADICAL_SAM"/>
    <property type="match status" value="1"/>
</dbReference>
<dbReference type="PROSITE" id="PS50926">
    <property type="entry name" value="TRAM"/>
    <property type="match status" value="1"/>
</dbReference>
<protein>
    <recommendedName>
        <fullName evidence="1">Ribosomal protein uS12 methylthiotransferase RimO</fullName>
        <shortName evidence="1">uS12 MTTase</shortName>
        <shortName evidence="1">uS12 methylthiotransferase</shortName>
        <ecNumber evidence="1">2.8.4.4</ecNumber>
    </recommendedName>
    <alternativeName>
        <fullName evidence="1">Ribosomal protein uS12 (aspartate-C(3))-methylthiotransferase</fullName>
    </alternativeName>
    <alternativeName>
        <fullName evidence="1">Ribosome maturation factor RimO</fullName>
    </alternativeName>
</protein>
<name>RIMO_BURCM</name>
<sequence>MSQSPKVGFVSLGCPKALVDSEQIITQLRAEGYEISGTYDGADLVVVNTCGFIDEAVQESLDAIGEALTENGKVIVTGCLGAKSSASGSNLIEEVHPKVLAVTGPHAVGEVMQAVHSHLPKPHDPFVDLVPAAGIKLTPRHYAYLKISEGCNHRCTFCIIPSMRGDLVSRPVAEVMLEAENLFKSGVKELLVISQDTSAYGVDVKYRTGFWNGKPIKTRMTDLVAALGELAAQYGAWVRLHYVYPYPSVDEVIPLMADGPFKGHVLPYLDVPFQHAHPEVLKRMKRPANAEKVLERVQKWREICPDLTIRSTFIAGFPGETEEQFETLLDFIREAELDRVGCFAYSPVEGASANELDGALPDDVREERRARFMEVAEEVSAQRIQRKVGKTLKVLIDEVSAEGGIGRTAADAPEIDGVVYVEPATKASKRYKVGDFVSVKITGADGHDLWGEV</sequence>